<protein>
    <recommendedName>
        <fullName evidence="1">ATP-dependent Clp protease proteolytic subunit 2</fullName>
        <ecNumber evidence="1">3.4.21.92</ecNumber>
    </recommendedName>
    <alternativeName>
        <fullName evidence="1">Endopeptidase Clp 2</fullName>
    </alternativeName>
</protein>
<keyword id="KW-0963">Cytoplasm</keyword>
<keyword id="KW-0378">Hydrolase</keyword>
<keyword id="KW-0645">Protease</keyword>
<keyword id="KW-1185">Reference proteome</keyword>
<keyword id="KW-0720">Serine protease</keyword>
<accession>Q7UK66</accession>
<name>CLPP2_RHOBA</name>
<evidence type="ECO:0000255" key="1">
    <source>
        <dbReference type="HAMAP-Rule" id="MF_00444"/>
    </source>
</evidence>
<proteinExistence type="inferred from homology"/>
<organism>
    <name type="scientific">Rhodopirellula baltica (strain DSM 10527 / NCIMB 13988 / SH1)</name>
    <dbReference type="NCBI Taxonomy" id="243090"/>
    <lineage>
        <taxon>Bacteria</taxon>
        <taxon>Pseudomonadati</taxon>
        <taxon>Planctomycetota</taxon>
        <taxon>Planctomycetia</taxon>
        <taxon>Pirellulales</taxon>
        <taxon>Pirellulaceae</taxon>
        <taxon>Rhodopirellula</taxon>
    </lineage>
</organism>
<feature type="chain" id="PRO_0000179637" description="ATP-dependent Clp protease proteolytic subunit 2">
    <location>
        <begin position="1"/>
        <end position="195"/>
    </location>
</feature>
<feature type="active site" description="Nucleophile" evidence="1">
    <location>
        <position position="98"/>
    </location>
</feature>
<feature type="active site" evidence="1">
    <location>
        <position position="123"/>
    </location>
</feature>
<gene>
    <name evidence="1" type="primary">clpP2</name>
    <name type="ordered locus">RB10829</name>
</gene>
<sequence>MPVIPYVVESNGREERTYDIYSRLLKDRIIFLGQQVDDQISNALVAQMLFLQADDPKKDIHMYINSPGGSITAGMAIYDTMQFVSCDVATYCIGQAASMGAVLLTAGAKGKRFALPNARIMIHQPLAGMQGTAREVEIHVAELRRIKQRMNEIMIEHTGHSLEKIEEDTDRDRFMSADEACSYGLIDKVVKSVDD</sequence>
<reference key="1">
    <citation type="journal article" date="2003" name="Proc. Natl. Acad. Sci. U.S.A.">
        <title>Complete genome sequence of the marine planctomycete Pirellula sp. strain 1.</title>
        <authorList>
            <person name="Gloeckner F.O."/>
            <person name="Kube M."/>
            <person name="Bauer M."/>
            <person name="Teeling H."/>
            <person name="Lombardot T."/>
            <person name="Ludwig W."/>
            <person name="Gade D."/>
            <person name="Beck A."/>
            <person name="Borzym K."/>
            <person name="Heitmann K."/>
            <person name="Rabus R."/>
            <person name="Schlesner H."/>
            <person name="Amann R."/>
            <person name="Reinhardt R."/>
        </authorList>
    </citation>
    <scope>NUCLEOTIDE SEQUENCE [LARGE SCALE GENOMIC DNA]</scope>
    <source>
        <strain>DSM 10527 / NCIMB 13988 / SH1</strain>
    </source>
</reference>
<dbReference type="EC" id="3.4.21.92" evidence="1"/>
<dbReference type="EMBL" id="BX294152">
    <property type="protein sequence ID" value="CAD77015.1"/>
    <property type="molecule type" value="Genomic_DNA"/>
</dbReference>
<dbReference type="RefSeq" id="NP_869637.1">
    <property type="nucleotide sequence ID" value="NC_005027.1"/>
</dbReference>
<dbReference type="RefSeq" id="WP_007327157.1">
    <property type="nucleotide sequence ID" value="NC_005027.1"/>
</dbReference>
<dbReference type="SMR" id="Q7UK66"/>
<dbReference type="FunCoup" id="Q7UK66">
    <property type="interactions" value="470"/>
</dbReference>
<dbReference type="STRING" id="243090.RB10829"/>
<dbReference type="MEROPS" id="S14.001"/>
<dbReference type="EnsemblBacteria" id="CAD77015">
    <property type="protein sequence ID" value="CAD77015"/>
    <property type="gene ID" value="RB10829"/>
</dbReference>
<dbReference type="KEGG" id="rba:RB10829"/>
<dbReference type="PATRIC" id="fig|243090.15.peg.5227"/>
<dbReference type="eggNOG" id="COG0740">
    <property type="taxonomic scope" value="Bacteria"/>
</dbReference>
<dbReference type="HOGENOM" id="CLU_058707_3_2_0"/>
<dbReference type="InParanoid" id="Q7UK66"/>
<dbReference type="OrthoDB" id="9802800at2"/>
<dbReference type="Proteomes" id="UP000001025">
    <property type="component" value="Chromosome"/>
</dbReference>
<dbReference type="GO" id="GO:0005737">
    <property type="term" value="C:cytoplasm"/>
    <property type="evidence" value="ECO:0007669"/>
    <property type="project" value="UniProtKB-SubCell"/>
</dbReference>
<dbReference type="GO" id="GO:0009368">
    <property type="term" value="C:endopeptidase Clp complex"/>
    <property type="evidence" value="ECO:0000318"/>
    <property type="project" value="GO_Central"/>
</dbReference>
<dbReference type="GO" id="GO:0004176">
    <property type="term" value="F:ATP-dependent peptidase activity"/>
    <property type="evidence" value="ECO:0000318"/>
    <property type="project" value="GO_Central"/>
</dbReference>
<dbReference type="GO" id="GO:0051117">
    <property type="term" value="F:ATPase binding"/>
    <property type="evidence" value="ECO:0000318"/>
    <property type="project" value="GO_Central"/>
</dbReference>
<dbReference type="GO" id="GO:0004252">
    <property type="term" value="F:serine-type endopeptidase activity"/>
    <property type="evidence" value="ECO:0000318"/>
    <property type="project" value="GO_Central"/>
</dbReference>
<dbReference type="GO" id="GO:0006515">
    <property type="term" value="P:protein quality control for misfolded or incompletely synthesized proteins"/>
    <property type="evidence" value="ECO:0000318"/>
    <property type="project" value="GO_Central"/>
</dbReference>
<dbReference type="CDD" id="cd07017">
    <property type="entry name" value="S14_ClpP_2"/>
    <property type="match status" value="1"/>
</dbReference>
<dbReference type="FunFam" id="3.90.226.10:FF:000001">
    <property type="entry name" value="ATP-dependent Clp protease proteolytic subunit"/>
    <property type="match status" value="1"/>
</dbReference>
<dbReference type="Gene3D" id="3.90.226.10">
    <property type="entry name" value="2-enoyl-CoA Hydratase, Chain A, domain 1"/>
    <property type="match status" value="1"/>
</dbReference>
<dbReference type="HAMAP" id="MF_00444">
    <property type="entry name" value="ClpP"/>
    <property type="match status" value="1"/>
</dbReference>
<dbReference type="InterPro" id="IPR001907">
    <property type="entry name" value="ClpP"/>
</dbReference>
<dbReference type="InterPro" id="IPR029045">
    <property type="entry name" value="ClpP/crotonase-like_dom_sf"/>
</dbReference>
<dbReference type="InterPro" id="IPR023562">
    <property type="entry name" value="ClpP/TepA"/>
</dbReference>
<dbReference type="InterPro" id="IPR033135">
    <property type="entry name" value="ClpP_His_AS"/>
</dbReference>
<dbReference type="InterPro" id="IPR018215">
    <property type="entry name" value="ClpP_Ser_AS"/>
</dbReference>
<dbReference type="NCBIfam" id="TIGR00493">
    <property type="entry name" value="clpP"/>
    <property type="match status" value="1"/>
</dbReference>
<dbReference type="NCBIfam" id="NF001368">
    <property type="entry name" value="PRK00277.1"/>
    <property type="match status" value="1"/>
</dbReference>
<dbReference type="NCBIfam" id="NF009205">
    <property type="entry name" value="PRK12553.1"/>
    <property type="match status" value="1"/>
</dbReference>
<dbReference type="PANTHER" id="PTHR10381">
    <property type="entry name" value="ATP-DEPENDENT CLP PROTEASE PROTEOLYTIC SUBUNIT"/>
    <property type="match status" value="1"/>
</dbReference>
<dbReference type="PANTHER" id="PTHR10381:SF70">
    <property type="entry name" value="ATP-DEPENDENT CLP PROTEASE PROTEOLYTIC SUBUNIT"/>
    <property type="match status" value="1"/>
</dbReference>
<dbReference type="Pfam" id="PF00574">
    <property type="entry name" value="CLP_protease"/>
    <property type="match status" value="1"/>
</dbReference>
<dbReference type="PRINTS" id="PR00127">
    <property type="entry name" value="CLPPROTEASEP"/>
</dbReference>
<dbReference type="SUPFAM" id="SSF52096">
    <property type="entry name" value="ClpP/crotonase"/>
    <property type="match status" value="1"/>
</dbReference>
<dbReference type="PROSITE" id="PS00382">
    <property type="entry name" value="CLP_PROTEASE_HIS"/>
    <property type="match status" value="1"/>
</dbReference>
<dbReference type="PROSITE" id="PS00381">
    <property type="entry name" value="CLP_PROTEASE_SER"/>
    <property type="match status" value="1"/>
</dbReference>
<comment type="function">
    <text evidence="1">Cleaves peptides in various proteins in a process that requires ATP hydrolysis. Has a chymotrypsin-like activity. Plays a major role in the degradation of misfolded proteins.</text>
</comment>
<comment type="catalytic activity">
    <reaction evidence="1">
        <text>Hydrolysis of proteins to small peptides in the presence of ATP and magnesium. alpha-casein is the usual test substrate. In the absence of ATP, only oligopeptides shorter than five residues are hydrolyzed (such as succinyl-Leu-Tyr-|-NHMec, and Leu-Tyr-Leu-|-Tyr-Trp, in which cleavage of the -Tyr-|-Leu- and -Tyr-|-Trp bonds also occurs).</text>
        <dbReference type="EC" id="3.4.21.92"/>
    </reaction>
</comment>
<comment type="subunit">
    <text evidence="1">Fourteen ClpP subunits assemble into 2 heptameric rings which stack back to back to give a disk-like structure with a central cavity, resembling the structure of eukaryotic proteasomes.</text>
</comment>
<comment type="subcellular location">
    <subcellularLocation>
        <location evidence="1">Cytoplasm</location>
    </subcellularLocation>
</comment>
<comment type="similarity">
    <text evidence="1">Belongs to the peptidase S14 family.</text>
</comment>